<accession>Q32DR0</accession>
<keyword id="KW-0997">Cell inner membrane</keyword>
<keyword id="KW-1003">Cell membrane</keyword>
<keyword id="KW-0472">Membrane</keyword>
<keyword id="KW-0520">NAD</keyword>
<keyword id="KW-0874">Quinone</keyword>
<keyword id="KW-1185">Reference proteome</keyword>
<keyword id="KW-1278">Translocase</keyword>
<keyword id="KW-0812">Transmembrane</keyword>
<keyword id="KW-1133">Transmembrane helix</keyword>
<keyword id="KW-0813">Transport</keyword>
<keyword id="KW-0830">Ubiquinone</keyword>
<gene>
    <name evidence="1" type="primary">nuoK</name>
    <name type="ordered locus">SDY_2475</name>
</gene>
<name>NUOK_SHIDS</name>
<feature type="chain" id="PRO_0000390238" description="NADH-quinone oxidoreductase subunit K">
    <location>
        <begin position="1"/>
        <end position="100"/>
    </location>
</feature>
<feature type="transmembrane region" description="Helical" evidence="1">
    <location>
        <begin position="4"/>
        <end position="24"/>
    </location>
</feature>
<feature type="transmembrane region" description="Helical" evidence="1">
    <location>
        <begin position="28"/>
        <end position="48"/>
    </location>
</feature>
<feature type="transmembrane region" description="Helical" evidence="1">
    <location>
        <begin position="60"/>
        <end position="80"/>
    </location>
</feature>
<organism>
    <name type="scientific">Shigella dysenteriae serotype 1 (strain Sd197)</name>
    <dbReference type="NCBI Taxonomy" id="300267"/>
    <lineage>
        <taxon>Bacteria</taxon>
        <taxon>Pseudomonadati</taxon>
        <taxon>Pseudomonadota</taxon>
        <taxon>Gammaproteobacteria</taxon>
        <taxon>Enterobacterales</taxon>
        <taxon>Enterobacteriaceae</taxon>
        <taxon>Shigella</taxon>
    </lineage>
</organism>
<protein>
    <recommendedName>
        <fullName evidence="1">NADH-quinone oxidoreductase subunit K</fullName>
        <ecNumber evidence="1">7.1.1.-</ecNumber>
    </recommendedName>
    <alternativeName>
        <fullName evidence="1">NADH dehydrogenase I subunit K</fullName>
    </alternativeName>
    <alternativeName>
        <fullName evidence="1">NDH-1 subunit K</fullName>
    </alternativeName>
</protein>
<evidence type="ECO:0000255" key="1">
    <source>
        <dbReference type="HAMAP-Rule" id="MF_01456"/>
    </source>
</evidence>
<sequence length="100" mass="10845">MIPLQHGLILAAILFVLGLTGLVIRRNLLFMLIGLEIMINASALAFVVAGSYWGQTDGQVMYILAISLAAAEASIGLALLLQLHRRRQNLNIDSVSEMRG</sequence>
<comment type="function">
    <text evidence="1">NDH-1 shuttles electrons from NADH, via FMN and iron-sulfur (Fe-S) centers, to quinones in the respiratory chain. The immediate electron acceptor for the enzyme in this species is believed to be ubiquinone. Couples the redox reaction to proton translocation (for every two electrons transferred, four hydrogen ions are translocated across the cytoplasmic membrane), and thus conserves the redox energy in a proton gradient.</text>
</comment>
<comment type="catalytic activity">
    <reaction evidence="1">
        <text>a quinone + NADH + 5 H(+)(in) = a quinol + NAD(+) + 4 H(+)(out)</text>
        <dbReference type="Rhea" id="RHEA:57888"/>
        <dbReference type="ChEBI" id="CHEBI:15378"/>
        <dbReference type="ChEBI" id="CHEBI:24646"/>
        <dbReference type="ChEBI" id="CHEBI:57540"/>
        <dbReference type="ChEBI" id="CHEBI:57945"/>
        <dbReference type="ChEBI" id="CHEBI:132124"/>
    </reaction>
</comment>
<comment type="subunit">
    <text evidence="1">NDH-1 is composed of 13 different subunits. Subunits NuoA, H, J, K, L, M, N constitute the membrane sector of the complex.</text>
</comment>
<comment type="subcellular location">
    <subcellularLocation>
        <location evidence="1">Cell inner membrane</location>
        <topology evidence="1">Multi-pass membrane protein</topology>
    </subcellularLocation>
</comment>
<comment type="similarity">
    <text evidence="1">Belongs to the complex I subunit 4L family.</text>
</comment>
<reference key="1">
    <citation type="journal article" date="2005" name="Nucleic Acids Res.">
        <title>Genome dynamics and diversity of Shigella species, the etiologic agents of bacillary dysentery.</title>
        <authorList>
            <person name="Yang F."/>
            <person name="Yang J."/>
            <person name="Zhang X."/>
            <person name="Chen L."/>
            <person name="Jiang Y."/>
            <person name="Yan Y."/>
            <person name="Tang X."/>
            <person name="Wang J."/>
            <person name="Xiong Z."/>
            <person name="Dong J."/>
            <person name="Xue Y."/>
            <person name="Zhu Y."/>
            <person name="Xu X."/>
            <person name="Sun L."/>
            <person name="Chen S."/>
            <person name="Nie H."/>
            <person name="Peng J."/>
            <person name="Xu J."/>
            <person name="Wang Y."/>
            <person name="Yuan Z."/>
            <person name="Wen Y."/>
            <person name="Yao Z."/>
            <person name="Shen Y."/>
            <person name="Qiang B."/>
            <person name="Hou Y."/>
            <person name="Yu J."/>
            <person name="Jin Q."/>
        </authorList>
    </citation>
    <scope>NUCLEOTIDE SEQUENCE [LARGE SCALE GENOMIC DNA]</scope>
    <source>
        <strain>Sd197</strain>
    </source>
</reference>
<dbReference type="EC" id="7.1.1.-" evidence="1"/>
<dbReference type="EMBL" id="CP000034">
    <property type="protein sequence ID" value="ABB62545.1"/>
    <property type="molecule type" value="Genomic_DNA"/>
</dbReference>
<dbReference type="RefSeq" id="WP_000612644.1">
    <property type="nucleotide sequence ID" value="NC_007606.1"/>
</dbReference>
<dbReference type="RefSeq" id="YP_404036.1">
    <property type="nucleotide sequence ID" value="NC_007606.1"/>
</dbReference>
<dbReference type="SMR" id="Q32DR0"/>
<dbReference type="STRING" id="300267.SDY_2475"/>
<dbReference type="EnsemblBacteria" id="ABB62545">
    <property type="protein sequence ID" value="ABB62545"/>
    <property type="gene ID" value="SDY_2475"/>
</dbReference>
<dbReference type="GeneID" id="93033872"/>
<dbReference type="KEGG" id="sdy:SDY_2475"/>
<dbReference type="PATRIC" id="fig|300267.13.peg.2986"/>
<dbReference type="HOGENOM" id="CLU_144724_0_1_6"/>
<dbReference type="Proteomes" id="UP000002716">
    <property type="component" value="Chromosome"/>
</dbReference>
<dbReference type="GO" id="GO:0030964">
    <property type="term" value="C:NADH dehydrogenase complex"/>
    <property type="evidence" value="ECO:0007669"/>
    <property type="project" value="TreeGrafter"/>
</dbReference>
<dbReference type="GO" id="GO:0005886">
    <property type="term" value="C:plasma membrane"/>
    <property type="evidence" value="ECO:0007669"/>
    <property type="project" value="UniProtKB-SubCell"/>
</dbReference>
<dbReference type="GO" id="GO:0050136">
    <property type="term" value="F:NADH:ubiquinone reductase (non-electrogenic) activity"/>
    <property type="evidence" value="ECO:0007669"/>
    <property type="project" value="UniProtKB-UniRule"/>
</dbReference>
<dbReference type="GO" id="GO:0048038">
    <property type="term" value="F:quinone binding"/>
    <property type="evidence" value="ECO:0007669"/>
    <property type="project" value="UniProtKB-KW"/>
</dbReference>
<dbReference type="GO" id="GO:0042773">
    <property type="term" value="P:ATP synthesis coupled electron transport"/>
    <property type="evidence" value="ECO:0007669"/>
    <property type="project" value="InterPro"/>
</dbReference>
<dbReference type="FunFam" id="1.10.287.3510:FF:000001">
    <property type="entry name" value="NADH-quinone oxidoreductase subunit K"/>
    <property type="match status" value="1"/>
</dbReference>
<dbReference type="Gene3D" id="1.10.287.3510">
    <property type="match status" value="1"/>
</dbReference>
<dbReference type="HAMAP" id="MF_01456">
    <property type="entry name" value="NDH1_NuoK"/>
    <property type="match status" value="1"/>
</dbReference>
<dbReference type="InterPro" id="IPR001133">
    <property type="entry name" value="NADH_UbQ_OxRdtase_chain4L/K"/>
</dbReference>
<dbReference type="InterPro" id="IPR039428">
    <property type="entry name" value="NUOK/Mnh_C1-like"/>
</dbReference>
<dbReference type="NCBIfam" id="NF004319">
    <property type="entry name" value="PRK05715.1-1"/>
    <property type="match status" value="1"/>
</dbReference>
<dbReference type="NCBIfam" id="NF004320">
    <property type="entry name" value="PRK05715.1-2"/>
    <property type="match status" value="1"/>
</dbReference>
<dbReference type="PANTHER" id="PTHR11434:SF16">
    <property type="entry name" value="NADH-UBIQUINONE OXIDOREDUCTASE CHAIN 4L"/>
    <property type="match status" value="1"/>
</dbReference>
<dbReference type="PANTHER" id="PTHR11434">
    <property type="entry name" value="NADH-UBIQUINONE OXIDOREDUCTASE SUBUNIT ND4L"/>
    <property type="match status" value="1"/>
</dbReference>
<dbReference type="Pfam" id="PF00420">
    <property type="entry name" value="Oxidored_q2"/>
    <property type="match status" value="1"/>
</dbReference>
<proteinExistence type="inferred from homology"/>